<dbReference type="EMBL" id="CP000435">
    <property type="protein sequence ID" value="ABI45542.1"/>
    <property type="molecule type" value="Genomic_DNA"/>
</dbReference>
<dbReference type="RefSeq" id="WP_006854824.1">
    <property type="nucleotide sequence ID" value="NC_008319.1"/>
</dbReference>
<dbReference type="SMR" id="Q0ID09"/>
<dbReference type="STRING" id="64471.sync_0433"/>
<dbReference type="KEGG" id="syg:sync_0433"/>
<dbReference type="eggNOG" id="COG0185">
    <property type="taxonomic scope" value="Bacteria"/>
</dbReference>
<dbReference type="HOGENOM" id="CLU_144911_0_1_3"/>
<dbReference type="OrthoDB" id="9797833at2"/>
<dbReference type="Proteomes" id="UP000001961">
    <property type="component" value="Chromosome"/>
</dbReference>
<dbReference type="GO" id="GO:0005737">
    <property type="term" value="C:cytoplasm"/>
    <property type="evidence" value="ECO:0007669"/>
    <property type="project" value="UniProtKB-ARBA"/>
</dbReference>
<dbReference type="GO" id="GO:0015935">
    <property type="term" value="C:small ribosomal subunit"/>
    <property type="evidence" value="ECO:0007669"/>
    <property type="project" value="InterPro"/>
</dbReference>
<dbReference type="GO" id="GO:0019843">
    <property type="term" value="F:rRNA binding"/>
    <property type="evidence" value="ECO:0007669"/>
    <property type="project" value="UniProtKB-UniRule"/>
</dbReference>
<dbReference type="GO" id="GO:0003735">
    <property type="term" value="F:structural constituent of ribosome"/>
    <property type="evidence" value="ECO:0007669"/>
    <property type="project" value="InterPro"/>
</dbReference>
<dbReference type="GO" id="GO:0000028">
    <property type="term" value="P:ribosomal small subunit assembly"/>
    <property type="evidence" value="ECO:0007669"/>
    <property type="project" value="TreeGrafter"/>
</dbReference>
<dbReference type="GO" id="GO:0006412">
    <property type="term" value="P:translation"/>
    <property type="evidence" value="ECO:0007669"/>
    <property type="project" value="UniProtKB-UniRule"/>
</dbReference>
<dbReference type="FunFam" id="3.30.860.10:FF:000001">
    <property type="entry name" value="30S ribosomal protein S19"/>
    <property type="match status" value="1"/>
</dbReference>
<dbReference type="Gene3D" id="3.30.860.10">
    <property type="entry name" value="30s Ribosomal Protein S19, Chain A"/>
    <property type="match status" value="1"/>
</dbReference>
<dbReference type="HAMAP" id="MF_00531">
    <property type="entry name" value="Ribosomal_uS19"/>
    <property type="match status" value="1"/>
</dbReference>
<dbReference type="InterPro" id="IPR002222">
    <property type="entry name" value="Ribosomal_uS19"/>
</dbReference>
<dbReference type="InterPro" id="IPR005732">
    <property type="entry name" value="Ribosomal_uS19_bac-type"/>
</dbReference>
<dbReference type="InterPro" id="IPR020934">
    <property type="entry name" value="Ribosomal_uS19_CS"/>
</dbReference>
<dbReference type="InterPro" id="IPR023575">
    <property type="entry name" value="Ribosomal_uS19_SF"/>
</dbReference>
<dbReference type="NCBIfam" id="TIGR01050">
    <property type="entry name" value="rpsS_bact"/>
    <property type="match status" value="1"/>
</dbReference>
<dbReference type="PANTHER" id="PTHR11880">
    <property type="entry name" value="RIBOSOMAL PROTEIN S19P FAMILY MEMBER"/>
    <property type="match status" value="1"/>
</dbReference>
<dbReference type="PANTHER" id="PTHR11880:SF8">
    <property type="entry name" value="SMALL RIBOSOMAL SUBUNIT PROTEIN US19M"/>
    <property type="match status" value="1"/>
</dbReference>
<dbReference type="Pfam" id="PF00203">
    <property type="entry name" value="Ribosomal_S19"/>
    <property type="match status" value="1"/>
</dbReference>
<dbReference type="PIRSF" id="PIRSF002144">
    <property type="entry name" value="Ribosomal_S19"/>
    <property type="match status" value="1"/>
</dbReference>
<dbReference type="PRINTS" id="PR00975">
    <property type="entry name" value="RIBOSOMALS19"/>
</dbReference>
<dbReference type="SUPFAM" id="SSF54570">
    <property type="entry name" value="Ribosomal protein S19"/>
    <property type="match status" value="1"/>
</dbReference>
<dbReference type="PROSITE" id="PS00323">
    <property type="entry name" value="RIBOSOMAL_S19"/>
    <property type="match status" value="1"/>
</dbReference>
<comment type="function">
    <text evidence="1">Protein S19 forms a complex with S13 that binds strongly to the 16S ribosomal RNA.</text>
</comment>
<comment type="similarity">
    <text evidence="1">Belongs to the universal ribosomal protein uS19 family.</text>
</comment>
<reference key="1">
    <citation type="journal article" date="2006" name="Proc. Natl. Acad. Sci. U.S.A.">
        <title>Genome sequence of Synechococcus CC9311: insights into adaptation to a coastal environment.</title>
        <authorList>
            <person name="Palenik B."/>
            <person name="Ren Q."/>
            <person name="Dupont C.L."/>
            <person name="Myers G.S."/>
            <person name="Heidelberg J.F."/>
            <person name="Badger J.H."/>
            <person name="Madupu R."/>
            <person name="Nelson W.C."/>
            <person name="Brinkac L.M."/>
            <person name="Dodson R.J."/>
            <person name="Durkin A.S."/>
            <person name="Daugherty S.C."/>
            <person name="Sullivan S.A."/>
            <person name="Khouri H."/>
            <person name="Mohamoud Y."/>
            <person name="Halpin R."/>
            <person name="Paulsen I.T."/>
        </authorList>
    </citation>
    <scope>NUCLEOTIDE SEQUENCE [LARGE SCALE GENOMIC DNA]</scope>
    <source>
        <strain>CC9311</strain>
    </source>
</reference>
<sequence length="91" mass="10093">MGRSLKKGPFIADSLLRKVEKQNAADDKSVIKTWSRASTILPMMIGHTIAVHNGRTHVPVFVTEQMVGHKLGEFAPTRTFKGHIKDKKGGR</sequence>
<keyword id="KW-1185">Reference proteome</keyword>
<keyword id="KW-0687">Ribonucleoprotein</keyword>
<keyword id="KW-0689">Ribosomal protein</keyword>
<keyword id="KW-0694">RNA-binding</keyword>
<keyword id="KW-0699">rRNA-binding</keyword>
<gene>
    <name evidence="1" type="primary">rpsS</name>
    <name evidence="1" type="synonym">rps19</name>
    <name type="ordered locus">sync_0433</name>
</gene>
<organism>
    <name type="scientific">Synechococcus sp. (strain CC9311)</name>
    <dbReference type="NCBI Taxonomy" id="64471"/>
    <lineage>
        <taxon>Bacteria</taxon>
        <taxon>Bacillati</taxon>
        <taxon>Cyanobacteriota</taxon>
        <taxon>Cyanophyceae</taxon>
        <taxon>Synechococcales</taxon>
        <taxon>Synechococcaceae</taxon>
        <taxon>Synechococcus</taxon>
    </lineage>
</organism>
<evidence type="ECO:0000255" key="1">
    <source>
        <dbReference type="HAMAP-Rule" id="MF_00531"/>
    </source>
</evidence>
<evidence type="ECO:0000305" key="2"/>
<feature type="chain" id="PRO_0000265449" description="Small ribosomal subunit protein uS19">
    <location>
        <begin position="1"/>
        <end position="91"/>
    </location>
</feature>
<protein>
    <recommendedName>
        <fullName evidence="1">Small ribosomal subunit protein uS19</fullName>
    </recommendedName>
    <alternativeName>
        <fullName evidence="2">30S ribosomal protein S19</fullName>
    </alternativeName>
</protein>
<name>RS19_SYNS3</name>
<proteinExistence type="inferred from homology"/>
<accession>Q0ID09</accession>